<organism>
    <name type="scientific">Salmonella gallinarum (strain 287/91 / NCTC 13346)</name>
    <dbReference type="NCBI Taxonomy" id="550538"/>
    <lineage>
        <taxon>Bacteria</taxon>
        <taxon>Pseudomonadati</taxon>
        <taxon>Pseudomonadota</taxon>
        <taxon>Gammaproteobacteria</taxon>
        <taxon>Enterobacterales</taxon>
        <taxon>Enterobacteriaceae</taxon>
        <taxon>Salmonella</taxon>
    </lineage>
</organism>
<reference key="1">
    <citation type="journal article" date="2008" name="Genome Res.">
        <title>Comparative genome analysis of Salmonella enteritidis PT4 and Salmonella gallinarum 287/91 provides insights into evolutionary and host adaptation pathways.</title>
        <authorList>
            <person name="Thomson N.R."/>
            <person name="Clayton D.J."/>
            <person name="Windhorst D."/>
            <person name="Vernikos G."/>
            <person name="Davidson S."/>
            <person name="Churcher C."/>
            <person name="Quail M.A."/>
            <person name="Stevens M."/>
            <person name="Jones M.A."/>
            <person name="Watson M."/>
            <person name="Barron A."/>
            <person name="Layton A."/>
            <person name="Pickard D."/>
            <person name="Kingsley R.A."/>
            <person name="Bignell A."/>
            <person name="Clark L."/>
            <person name="Harris B."/>
            <person name="Ormond D."/>
            <person name="Abdellah Z."/>
            <person name="Brooks K."/>
            <person name="Cherevach I."/>
            <person name="Chillingworth T."/>
            <person name="Woodward J."/>
            <person name="Norberczak H."/>
            <person name="Lord A."/>
            <person name="Arrowsmith C."/>
            <person name="Jagels K."/>
            <person name="Moule S."/>
            <person name="Mungall K."/>
            <person name="Saunders M."/>
            <person name="Whitehead S."/>
            <person name="Chabalgoity J.A."/>
            <person name="Maskell D."/>
            <person name="Humphreys T."/>
            <person name="Roberts M."/>
            <person name="Barrow P.A."/>
            <person name="Dougan G."/>
            <person name="Parkhill J."/>
        </authorList>
    </citation>
    <scope>NUCLEOTIDE SEQUENCE [LARGE SCALE GENOMIC DNA]</scope>
    <source>
        <strain>287/91 / NCTC 13346</strain>
    </source>
</reference>
<feature type="chain" id="PRO_1000186953" description="Siroheme synthase">
    <location>
        <begin position="1"/>
        <end position="457"/>
    </location>
</feature>
<feature type="region of interest" description="Precorrin-2 dehydrogenase /sirohydrochlorin ferrochelatase" evidence="1">
    <location>
        <begin position="1"/>
        <end position="204"/>
    </location>
</feature>
<feature type="region of interest" description="Uroporphyrinogen-III C-methyltransferase" evidence="1">
    <location>
        <begin position="216"/>
        <end position="457"/>
    </location>
</feature>
<feature type="active site" description="Proton acceptor" evidence="1">
    <location>
        <position position="248"/>
    </location>
</feature>
<feature type="active site" description="Proton donor" evidence="1">
    <location>
        <position position="270"/>
    </location>
</feature>
<feature type="binding site" evidence="1">
    <location>
        <begin position="22"/>
        <end position="23"/>
    </location>
    <ligand>
        <name>NAD(+)</name>
        <dbReference type="ChEBI" id="CHEBI:57540"/>
    </ligand>
</feature>
<feature type="binding site" evidence="1">
    <location>
        <begin position="43"/>
        <end position="44"/>
    </location>
    <ligand>
        <name>NAD(+)</name>
        <dbReference type="ChEBI" id="CHEBI:57540"/>
    </ligand>
</feature>
<feature type="binding site" evidence="1">
    <location>
        <position position="225"/>
    </location>
    <ligand>
        <name>S-adenosyl-L-methionine</name>
        <dbReference type="ChEBI" id="CHEBI:59789"/>
    </ligand>
</feature>
<feature type="binding site" evidence="1">
    <location>
        <begin position="301"/>
        <end position="303"/>
    </location>
    <ligand>
        <name>S-adenosyl-L-methionine</name>
        <dbReference type="ChEBI" id="CHEBI:59789"/>
    </ligand>
</feature>
<feature type="binding site" evidence="1">
    <location>
        <position position="306"/>
    </location>
    <ligand>
        <name>S-adenosyl-L-methionine</name>
        <dbReference type="ChEBI" id="CHEBI:59789"/>
    </ligand>
</feature>
<feature type="binding site" evidence="1">
    <location>
        <begin position="331"/>
        <end position="332"/>
    </location>
    <ligand>
        <name>S-adenosyl-L-methionine</name>
        <dbReference type="ChEBI" id="CHEBI:59789"/>
    </ligand>
</feature>
<feature type="binding site" evidence="1">
    <location>
        <position position="382"/>
    </location>
    <ligand>
        <name>S-adenosyl-L-methionine</name>
        <dbReference type="ChEBI" id="CHEBI:59789"/>
    </ligand>
</feature>
<feature type="binding site" evidence="1">
    <location>
        <position position="411"/>
    </location>
    <ligand>
        <name>S-adenosyl-L-methionine</name>
        <dbReference type="ChEBI" id="CHEBI:59789"/>
    </ligand>
</feature>
<feature type="modified residue" description="Phosphoserine" evidence="1">
    <location>
        <position position="128"/>
    </location>
</feature>
<keyword id="KW-0169">Cobalamin biosynthesis</keyword>
<keyword id="KW-0456">Lyase</keyword>
<keyword id="KW-0489">Methyltransferase</keyword>
<keyword id="KW-0511">Multifunctional enzyme</keyword>
<keyword id="KW-0520">NAD</keyword>
<keyword id="KW-0560">Oxidoreductase</keyword>
<keyword id="KW-0597">Phosphoprotein</keyword>
<keyword id="KW-0627">Porphyrin biosynthesis</keyword>
<keyword id="KW-0949">S-adenosyl-L-methionine</keyword>
<keyword id="KW-0808">Transferase</keyword>
<dbReference type="EC" id="2.1.1.107" evidence="1"/>
<dbReference type="EC" id="1.3.1.76" evidence="1"/>
<dbReference type="EC" id="4.99.1.4" evidence="1"/>
<dbReference type="EMBL" id="AM933173">
    <property type="protein sequence ID" value="CAR39733.1"/>
    <property type="molecule type" value="Genomic_DNA"/>
</dbReference>
<dbReference type="RefSeq" id="WP_000349909.1">
    <property type="nucleotide sequence ID" value="NC_011274.1"/>
</dbReference>
<dbReference type="SMR" id="B5R7N6"/>
<dbReference type="KEGG" id="seg:SG3962"/>
<dbReference type="HOGENOM" id="CLU_011276_2_0_6"/>
<dbReference type="UniPathway" id="UPA00148">
    <property type="reaction ID" value="UER00211"/>
</dbReference>
<dbReference type="UniPathway" id="UPA00148">
    <property type="reaction ID" value="UER00222"/>
</dbReference>
<dbReference type="UniPathway" id="UPA00262">
    <property type="reaction ID" value="UER00211"/>
</dbReference>
<dbReference type="UniPathway" id="UPA00262">
    <property type="reaction ID" value="UER00222"/>
</dbReference>
<dbReference type="UniPathway" id="UPA00262">
    <property type="reaction ID" value="UER00376"/>
</dbReference>
<dbReference type="Proteomes" id="UP000008321">
    <property type="component" value="Chromosome"/>
</dbReference>
<dbReference type="GO" id="GO:0051287">
    <property type="term" value="F:NAD binding"/>
    <property type="evidence" value="ECO:0007669"/>
    <property type="project" value="InterPro"/>
</dbReference>
<dbReference type="GO" id="GO:0043115">
    <property type="term" value="F:precorrin-2 dehydrogenase activity"/>
    <property type="evidence" value="ECO:0007669"/>
    <property type="project" value="UniProtKB-UniRule"/>
</dbReference>
<dbReference type="GO" id="GO:0051266">
    <property type="term" value="F:sirohydrochlorin ferrochelatase activity"/>
    <property type="evidence" value="ECO:0007669"/>
    <property type="project" value="UniProtKB-EC"/>
</dbReference>
<dbReference type="GO" id="GO:0004851">
    <property type="term" value="F:uroporphyrin-III C-methyltransferase activity"/>
    <property type="evidence" value="ECO:0007669"/>
    <property type="project" value="UniProtKB-UniRule"/>
</dbReference>
<dbReference type="GO" id="GO:0009236">
    <property type="term" value="P:cobalamin biosynthetic process"/>
    <property type="evidence" value="ECO:0007669"/>
    <property type="project" value="UniProtKB-UniRule"/>
</dbReference>
<dbReference type="GO" id="GO:0032259">
    <property type="term" value="P:methylation"/>
    <property type="evidence" value="ECO:0007669"/>
    <property type="project" value="UniProtKB-KW"/>
</dbReference>
<dbReference type="GO" id="GO:0019354">
    <property type="term" value="P:siroheme biosynthetic process"/>
    <property type="evidence" value="ECO:0007669"/>
    <property type="project" value="UniProtKB-UniRule"/>
</dbReference>
<dbReference type="CDD" id="cd11642">
    <property type="entry name" value="SUMT"/>
    <property type="match status" value="1"/>
</dbReference>
<dbReference type="FunFam" id="1.10.8.210:FF:000001">
    <property type="entry name" value="Siroheme synthase"/>
    <property type="match status" value="1"/>
</dbReference>
<dbReference type="FunFam" id="3.30.160.110:FF:000001">
    <property type="entry name" value="Siroheme synthase"/>
    <property type="match status" value="1"/>
</dbReference>
<dbReference type="FunFam" id="3.30.950.10:FF:000001">
    <property type="entry name" value="Siroheme synthase"/>
    <property type="match status" value="1"/>
</dbReference>
<dbReference type="FunFam" id="3.40.1010.10:FF:000001">
    <property type="entry name" value="Siroheme synthase"/>
    <property type="match status" value="1"/>
</dbReference>
<dbReference type="FunFam" id="3.40.50.720:FF:000092">
    <property type="entry name" value="Siroheme synthase"/>
    <property type="match status" value="1"/>
</dbReference>
<dbReference type="Gene3D" id="3.40.1010.10">
    <property type="entry name" value="Cobalt-precorrin-4 Transmethylase, Domain 1"/>
    <property type="match status" value="1"/>
</dbReference>
<dbReference type="Gene3D" id="3.30.950.10">
    <property type="entry name" value="Methyltransferase, Cobalt-precorrin-4 Transmethylase, Domain 2"/>
    <property type="match status" value="1"/>
</dbReference>
<dbReference type="Gene3D" id="3.40.50.720">
    <property type="entry name" value="NAD(P)-binding Rossmann-like Domain"/>
    <property type="match status" value="1"/>
</dbReference>
<dbReference type="Gene3D" id="1.10.8.210">
    <property type="entry name" value="Sirohaem synthase, dimerisation domain"/>
    <property type="match status" value="1"/>
</dbReference>
<dbReference type="Gene3D" id="3.30.160.110">
    <property type="entry name" value="Siroheme synthase, domain 2"/>
    <property type="match status" value="1"/>
</dbReference>
<dbReference type="HAMAP" id="MF_01646">
    <property type="entry name" value="Siroheme_synth"/>
    <property type="match status" value="1"/>
</dbReference>
<dbReference type="InterPro" id="IPR000878">
    <property type="entry name" value="4pyrrol_Mease"/>
</dbReference>
<dbReference type="InterPro" id="IPR035996">
    <property type="entry name" value="4pyrrol_Methylase_sf"/>
</dbReference>
<dbReference type="InterPro" id="IPR014777">
    <property type="entry name" value="4pyrrole_Mease_sub1"/>
</dbReference>
<dbReference type="InterPro" id="IPR014776">
    <property type="entry name" value="4pyrrole_Mease_sub2"/>
</dbReference>
<dbReference type="InterPro" id="IPR006366">
    <property type="entry name" value="CobA/CysG_C"/>
</dbReference>
<dbReference type="InterPro" id="IPR036291">
    <property type="entry name" value="NAD(P)-bd_dom_sf"/>
</dbReference>
<dbReference type="InterPro" id="IPR050161">
    <property type="entry name" value="Siro_Cobalamin_biosynth"/>
</dbReference>
<dbReference type="InterPro" id="IPR037115">
    <property type="entry name" value="Sirohaem_synt_dimer_dom_sf"/>
</dbReference>
<dbReference type="InterPro" id="IPR012409">
    <property type="entry name" value="Sirohaem_synth"/>
</dbReference>
<dbReference type="InterPro" id="IPR028281">
    <property type="entry name" value="Sirohaem_synthase_central"/>
</dbReference>
<dbReference type="InterPro" id="IPR019478">
    <property type="entry name" value="Sirohaem_synthase_dimer_dom"/>
</dbReference>
<dbReference type="InterPro" id="IPR006367">
    <property type="entry name" value="Sirohaem_synthase_N"/>
</dbReference>
<dbReference type="InterPro" id="IPR003043">
    <property type="entry name" value="Uropor_MeTrfase_CS"/>
</dbReference>
<dbReference type="NCBIfam" id="TIGR01469">
    <property type="entry name" value="cobA_cysG_Cterm"/>
    <property type="match status" value="1"/>
</dbReference>
<dbReference type="NCBIfam" id="TIGR01470">
    <property type="entry name" value="cysG_Nterm"/>
    <property type="match status" value="1"/>
</dbReference>
<dbReference type="NCBIfam" id="NF004790">
    <property type="entry name" value="PRK06136.1"/>
    <property type="match status" value="1"/>
</dbReference>
<dbReference type="NCBIfam" id="NF007922">
    <property type="entry name" value="PRK10637.1"/>
    <property type="match status" value="1"/>
</dbReference>
<dbReference type="PANTHER" id="PTHR45790:SF1">
    <property type="entry name" value="SIROHEME SYNTHASE"/>
    <property type="match status" value="1"/>
</dbReference>
<dbReference type="PANTHER" id="PTHR45790">
    <property type="entry name" value="SIROHEME SYNTHASE-RELATED"/>
    <property type="match status" value="1"/>
</dbReference>
<dbReference type="Pfam" id="PF10414">
    <property type="entry name" value="CysG_dimeriser"/>
    <property type="match status" value="1"/>
</dbReference>
<dbReference type="Pfam" id="PF13241">
    <property type="entry name" value="NAD_binding_7"/>
    <property type="match status" value="1"/>
</dbReference>
<dbReference type="Pfam" id="PF14824">
    <property type="entry name" value="Sirohm_synth_M"/>
    <property type="match status" value="1"/>
</dbReference>
<dbReference type="Pfam" id="PF00590">
    <property type="entry name" value="TP_methylase"/>
    <property type="match status" value="1"/>
</dbReference>
<dbReference type="PIRSF" id="PIRSF036426">
    <property type="entry name" value="Sirohaem_synth"/>
    <property type="match status" value="1"/>
</dbReference>
<dbReference type="SUPFAM" id="SSF51735">
    <property type="entry name" value="NAD(P)-binding Rossmann-fold domains"/>
    <property type="match status" value="1"/>
</dbReference>
<dbReference type="SUPFAM" id="SSF75615">
    <property type="entry name" value="Siroheme synthase middle domains-like"/>
    <property type="match status" value="1"/>
</dbReference>
<dbReference type="SUPFAM" id="SSF53790">
    <property type="entry name" value="Tetrapyrrole methylase"/>
    <property type="match status" value="1"/>
</dbReference>
<dbReference type="PROSITE" id="PS00839">
    <property type="entry name" value="SUMT_1"/>
    <property type="match status" value="1"/>
</dbReference>
<dbReference type="PROSITE" id="PS00840">
    <property type="entry name" value="SUMT_2"/>
    <property type="match status" value="1"/>
</dbReference>
<sequence length="457" mass="50177">MDHLPIFCQLRDRDCLIVGGGDVAERKARLMLEAGARLTVNALTFIPQFTVWANEGMLTLVEGPFDETLLDSCWLAIAATDDDTVNQRVSDAAESRRIFCNVVDAPKAASFIMPSIIDRSPLMVAVSSGGTSPVLARLLREKLESLLPQHLGQVARYAGQLRARVKKQFATMGERRRFWEKFFVNDRLAQSLANADEKAVNATTERLFSEPLDHRGEVVLVGAGPGDAGLLTLKGLQQIQQADIVVYDRLVSDDIMNLVRRDADRVFVGKRAGYHCVPQEEINQILLREAQKGKRVVRLKGGDPFIFGRGGEELETLCHAGIPFSVVPGITAASGCSAYSGIPLTHRDYAQSVRLVTGHLKTGGELDWENLAAEKQTLVFYMGLNQAATIQEKLIAFGMQADMPVALVENGTSVKQRVVHGVLTQLGELAQQVESPALIIVGRVVGLRDKLNWFSNY</sequence>
<gene>
    <name evidence="1" type="primary">cysG</name>
    <name type="ordered locus">SG3962</name>
</gene>
<accession>B5R7N6</accession>
<protein>
    <recommendedName>
        <fullName evidence="1">Siroheme synthase</fullName>
    </recommendedName>
    <domain>
        <recommendedName>
            <fullName evidence="1">Uroporphyrinogen-III C-methyltransferase</fullName>
            <shortName evidence="1">Urogen III methylase</shortName>
            <ecNumber evidence="1">2.1.1.107</ecNumber>
        </recommendedName>
        <alternativeName>
            <fullName evidence="1">SUMT</fullName>
        </alternativeName>
        <alternativeName>
            <fullName evidence="1">Uroporphyrinogen III methylase</fullName>
            <shortName evidence="1">UROM</shortName>
        </alternativeName>
    </domain>
    <domain>
        <recommendedName>
            <fullName evidence="1">Precorrin-2 dehydrogenase</fullName>
            <ecNumber evidence="1">1.3.1.76</ecNumber>
        </recommendedName>
    </domain>
    <domain>
        <recommendedName>
            <fullName evidence="1">Sirohydrochlorin ferrochelatase</fullName>
            <ecNumber evidence="1">4.99.1.4</ecNumber>
        </recommendedName>
    </domain>
</protein>
<name>CYSG_SALG2</name>
<evidence type="ECO:0000255" key="1">
    <source>
        <dbReference type="HAMAP-Rule" id="MF_01646"/>
    </source>
</evidence>
<comment type="function">
    <text evidence="1">Multifunctional enzyme that catalyzes the SAM-dependent methylations of uroporphyrinogen III at position C-2 and C-7 to form precorrin-2 via precorrin-1. Then it catalyzes the NAD-dependent ring dehydrogenation of precorrin-2 to yield sirohydrochlorin. Finally, it catalyzes the ferrochelation of sirohydrochlorin to yield siroheme.</text>
</comment>
<comment type="catalytic activity">
    <reaction evidence="1">
        <text>uroporphyrinogen III + 2 S-adenosyl-L-methionine = precorrin-2 + 2 S-adenosyl-L-homocysteine + H(+)</text>
        <dbReference type="Rhea" id="RHEA:32459"/>
        <dbReference type="ChEBI" id="CHEBI:15378"/>
        <dbReference type="ChEBI" id="CHEBI:57308"/>
        <dbReference type="ChEBI" id="CHEBI:57856"/>
        <dbReference type="ChEBI" id="CHEBI:58827"/>
        <dbReference type="ChEBI" id="CHEBI:59789"/>
        <dbReference type="EC" id="2.1.1.107"/>
    </reaction>
</comment>
<comment type="catalytic activity">
    <reaction evidence="1">
        <text>precorrin-2 + NAD(+) = sirohydrochlorin + NADH + 2 H(+)</text>
        <dbReference type="Rhea" id="RHEA:15613"/>
        <dbReference type="ChEBI" id="CHEBI:15378"/>
        <dbReference type="ChEBI" id="CHEBI:57540"/>
        <dbReference type="ChEBI" id="CHEBI:57945"/>
        <dbReference type="ChEBI" id="CHEBI:58351"/>
        <dbReference type="ChEBI" id="CHEBI:58827"/>
        <dbReference type="EC" id="1.3.1.76"/>
    </reaction>
</comment>
<comment type="catalytic activity">
    <reaction evidence="1">
        <text>siroheme + 2 H(+) = sirohydrochlorin + Fe(2+)</text>
        <dbReference type="Rhea" id="RHEA:24360"/>
        <dbReference type="ChEBI" id="CHEBI:15378"/>
        <dbReference type="ChEBI" id="CHEBI:29033"/>
        <dbReference type="ChEBI" id="CHEBI:58351"/>
        <dbReference type="ChEBI" id="CHEBI:60052"/>
        <dbReference type="EC" id="4.99.1.4"/>
    </reaction>
</comment>
<comment type="pathway">
    <text evidence="1">Cofactor biosynthesis; adenosylcobalamin biosynthesis; precorrin-2 from uroporphyrinogen III: step 1/1.</text>
</comment>
<comment type="pathway">
    <text evidence="1">Cofactor biosynthesis; adenosylcobalamin biosynthesis; sirohydrochlorin from precorrin-2: step 1/1.</text>
</comment>
<comment type="pathway">
    <text evidence="1">Porphyrin-containing compound metabolism; siroheme biosynthesis; precorrin-2 from uroporphyrinogen III: step 1/1.</text>
</comment>
<comment type="pathway">
    <text evidence="1">Porphyrin-containing compound metabolism; siroheme biosynthesis; siroheme from sirohydrochlorin: step 1/1.</text>
</comment>
<comment type="pathway">
    <text evidence="1">Porphyrin-containing compound metabolism; siroheme biosynthesis; sirohydrochlorin from precorrin-2: step 1/1.</text>
</comment>
<comment type="similarity">
    <text evidence="1">In the N-terminal section; belongs to the precorrin-2 dehydrogenase / sirohydrochlorin ferrochelatase family.</text>
</comment>
<comment type="similarity">
    <text evidence="1">In the C-terminal section; belongs to the precorrin methyltransferase family.</text>
</comment>
<proteinExistence type="inferred from homology"/>